<gene>
    <name evidence="1" type="primary">Nubp1</name>
    <name type="ORF">AAEL010360</name>
</gene>
<feature type="chain" id="PRO_0000382598" description="Cytosolic Fe-S cluster assembly factor Nubp1 homolog">
    <location>
        <begin position="1"/>
        <end position="318"/>
    </location>
</feature>
<feature type="region of interest" description="Disordered" evidence="3">
    <location>
        <begin position="1"/>
        <end position="29"/>
    </location>
</feature>
<feature type="compositionally biased region" description="Basic and acidic residues" evidence="3">
    <location>
        <begin position="1"/>
        <end position="15"/>
    </location>
</feature>
<feature type="binding site" evidence="2">
    <location>
        <position position="17"/>
    </location>
    <ligand>
        <name>[4Fe-4S] cluster</name>
        <dbReference type="ChEBI" id="CHEBI:49883"/>
        <label>1</label>
    </ligand>
</feature>
<feature type="binding site" evidence="2">
    <location>
        <position position="31"/>
    </location>
    <ligand>
        <name>[4Fe-4S] cluster</name>
        <dbReference type="ChEBI" id="CHEBI:49883"/>
        <label>1</label>
    </ligand>
</feature>
<feature type="binding site" evidence="2">
    <location>
        <position position="34"/>
    </location>
    <ligand>
        <name>[4Fe-4S] cluster</name>
        <dbReference type="ChEBI" id="CHEBI:49883"/>
        <label>1</label>
    </ligand>
</feature>
<feature type="binding site" evidence="2">
    <location>
        <position position="40"/>
    </location>
    <ligand>
        <name>[4Fe-4S] cluster</name>
        <dbReference type="ChEBI" id="CHEBI:49883"/>
        <label>1</label>
    </ligand>
</feature>
<feature type="binding site" evidence="2">
    <location>
        <begin position="70"/>
        <end position="77"/>
    </location>
    <ligand>
        <name>ATP</name>
        <dbReference type="ChEBI" id="CHEBI:30616"/>
    </ligand>
</feature>
<feature type="binding site" evidence="2">
    <location>
        <position position="245"/>
    </location>
    <ligand>
        <name>[4Fe-4S] cluster</name>
        <dbReference type="ChEBI" id="CHEBI:49883"/>
        <label>2</label>
        <note>ligand shared with heterodimeric partner</note>
    </ligand>
</feature>
<feature type="binding site" evidence="2">
    <location>
        <position position="248"/>
    </location>
    <ligand>
        <name>[4Fe-4S] cluster</name>
        <dbReference type="ChEBI" id="CHEBI:49883"/>
        <label>2</label>
        <note>ligand shared with heterodimeric partner</note>
    </ligand>
</feature>
<comment type="function">
    <text evidence="2">Component of the cytosolic iron-sulfur (Fe/S) protein assembly (CIA) machinery. Required for maturation of extramitochondrial Fe-S proteins. The Nubp1-Nubp2 heterotetramer forms a Fe-S scaffold complex, mediating the de novo assembly of an Fe-S cluster and its transfer to target apoproteins.</text>
</comment>
<comment type="cofactor">
    <cofactor evidence="2">
        <name>[4Fe-4S] cluster</name>
        <dbReference type="ChEBI" id="CHEBI:49883"/>
    </cofactor>
    <text evidence="2">Binds 4 [4Fe-4S] clusters per heterotetramer. Contains two stable clusters in the N-termini of Nubp1 and two labile, bridging clusters between subunits of the Nubp1-Nubp2 heterotetramer.</text>
</comment>
<comment type="subunit">
    <text evidence="2">Heterotetramer of 2 Nubp1 and 2 Nubp2 chains.</text>
</comment>
<comment type="subcellular location">
    <subcellularLocation>
        <location evidence="2">Cytoplasm</location>
    </subcellularLocation>
</comment>
<comment type="similarity">
    <text evidence="2">Belongs to the Mrp/NBP35 ATP-binding proteins family. NUBP1/NBP35 subfamily.</text>
</comment>
<comment type="sequence caution" evidence="4">
    <conflict type="erroneous gene model prediction">
        <sequence resource="EMBL-CDS" id="EAT37675"/>
    </conflict>
</comment>
<keyword id="KW-0004">4Fe-4S</keyword>
<keyword id="KW-0067">ATP-binding</keyword>
<keyword id="KW-0963">Cytoplasm</keyword>
<keyword id="KW-0408">Iron</keyword>
<keyword id="KW-0411">Iron-sulfur</keyword>
<keyword id="KW-0479">Metal-binding</keyword>
<keyword id="KW-0547">Nucleotide-binding</keyword>
<keyword id="KW-1185">Reference proteome</keyword>
<name>NUBP1_AEDAE</name>
<dbReference type="EMBL" id="CH477658">
    <property type="protein sequence ID" value="EAT37675.1"/>
    <property type="status" value="ALT_SEQ"/>
    <property type="molecule type" value="Genomic_DNA"/>
</dbReference>
<dbReference type="RefSeq" id="XP_001654476.1">
    <property type="nucleotide sequence ID" value="XM_001654426.1"/>
</dbReference>
<dbReference type="SMR" id="Q16T79"/>
<dbReference type="FunCoup" id="Q16T79">
    <property type="interactions" value="772"/>
</dbReference>
<dbReference type="STRING" id="7159.Q16T79"/>
<dbReference type="PaxDb" id="7159-AAEL010360-PA"/>
<dbReference type="VEuPathDB" id="VectorBase:AAEL010360"/>
<dbReference type="eggNOG" id="KOG3022">
    <property type="taxonomic scope" value="Eukaryota"/>
</dbReference>
<dbReference type="HOGENOM" id="CLU_024839_0_1_1"/>
<dbReference type="InParanoid" id="Q16T79"/>
<dbReference type="Proteomes" id="UP000008820">
    <property type="component" value="Chromosome 3"/>
</dbReference>
<dbReference type="Proteomes" id="UP000682892">
    <property type="component" value="Unassembled WGS sequence"/>
</dbReference>
<dbReference type="GO" id="GO:0005829">
    <property type="term" value="C:cytosol"/>
    <property type="evidence" value="ECO:0000250"/>
    <property type="project" value="UniProtKB"/>
</dbReference>
<dbReference type="GO" id="GO:0051539">
    <property type="term" value="F:4 iron, 4 sulfur cluster binding"/>
    <property type="evidence" value="ECO:0007669"/>
    <property type="project" value="UniProtKB-UniRule"/>
</dbReference>
<dbReference type="GO" id="GO:0005524">
    <property type="term" value="F:ATP binding"/>
    <property type="evidence" value="ECO:0007669"/>
    <property type="project" value="UniProtKB-KW"/>
</dbReference>
<dbReference type="GO" id="GO:0140663">
    <property type="term" value="F:ATP-dependent FeS chaperone activity"/>
    <property type="evidence" value="ECO:0007669"/>
    <property type="project" value="InterPro"/>
</dbReference>
<dbReference type="GO" id="GO:0051536">
    <property type="term" value="F:iron-sulfur cluster binding"/>
    <property type="evidence" value="ECO:0000250"/>
    <property type="project" value="UniProtKB"/>
</dbReference>
<dbReference type="GO" id="GO:0046872">
    <property type="term" value="F:metal ion binding"/>
    <property type="evidence" value="ECO:0007669"/>
    <property type="project" value="UniProtKB-KW"/>
</dbReference>
<dbReference type="GO" id="GO:0016226">
    <property type="term" value="P:iron-sulfur cluster assembly"/>
    <property type="evidence" value="ECO:0000250"/>
    <property type="project" value="UniProtKB"/>
</dbReference>
<dbReference type="CDD" id="cd02037">
    <property type="entry name" value="Mrp_NBP35"/>
    <property type="match status" value="1"/>
</dbReference>
<dbReference type="FunFam" id="3.40.50.300:FF:000427">
    <property type="entry name" value="Cytosolic Fe-S cluster assembly factor NUBP1"/>
    <property type="match status" value="1"/>
</dbReference>
<dbReference type="Gene3D" id="3.40.50.300">
    <property type="entry name" value="P-loop containing nucleotide triphosphate hydrolases"/>
    <property type="match status" value="1"/>
</dbReference>
<dbReference type="HAMAP" id="MF_02040">
    <property type="entry name" value="Mrp_NBP35"/>
    <property type="match status" value="1"/>
</dbReference>
<dbReference type="HAMAP" id="MF_03038">
    <property type="entry name" value="NUBP1"/>
    <property type="match status" value="1"/>
</dbReference>
<dbReference type="InterPro" id="IPR000808">
    <property type="entry name" value="Mrp-like_CS"/>
</dbReference>
<dbReference type="InterPro" id="IPR019591">
    <property type="entry name" value="Mrp/NBP35_ATP-bd"/>
</dbReference>
<dbReference type="InterPro" id="IPR028601">
    <property type="entry name" value="NUBP1/Nbp35"/>
</dbReference>
<dbReference type="InterPro" id="IPR027417">
    <property type="entry name" value="P-loop_NTPase"/>
</dbReference>
<dbReference type="InterPro" id="IPR033756">
    <property type="entry name" value="YlxH/NBP35"/>
</dbReference>
<dbReference type="PANTHER" id="PTHR23264:SF35">
    <property type="entry name" value="CYTOSOLIC FE-S CLUSTER ASSEMBLY FACTOR NUBP1"/>
    <property type="match status" value="1"/>
</dbReference>
<dbReference type="PANTHER" id="PTHR23264">
    <property type="entry name" value="NUCLEOTIDE-BINDING PROTEIN NBP35 YEAST -RELATED"/>
    <property type="match status" value="1"/>
</dbReference>
<dbReference type="Pfam" id="PF10609">
    <property type="entry name" value="ParA"/>
    <property type="match status" value="1"/>
</dbReference>
<dbReference type="SUPFAM" id="SSF52540">
    <property type="entry name" value="P-loop containing nucleoside triphosphate hydrolases"/>
    <property type="match status" value="1"/>
</dbReference>
<dbReference type="PROSITE" id="PS01215">
    <property type="entry name" value="MRP"/>
    <property type="match status" value="1"/>
</dbReference>
<protein>
    <recommendedName>
        <fullName evidence="2">Cytosolic Fe-S cluster assembly factor Nubp1 homolog</fullName>
    </recommendedName>
</protein>
<accession>Q16T79</accession>
<sequence length="318" mass="34155">MSAPEVENKPADAPEHCPGTESENAGKASACAGCPNQQICATGPKGPDPSIALVKEKLKEVRNKILVLSGKGGVGKSTVTALLSRAMAQLNPERNYGVLDVDICGPSQPRVLGVLGEQVHQSGSGWSPVYVEDNLSLMSIGFLLGSPDDAIIWRGPKKNGMIRQFLTEVDWGQLDYLVLDTPPGTSDEHLSATTFLKETDGNWGAVLVTTPQEVALLDVRKEITFCKKMGIPVVGVVENMSVFVCPKCTTESDIFPAKTGGAEKMCEEMEVAYLGKLPLDPRLAKCCDEGKDFITEHSKSPTVIALHQIVAKVQDFFD</sequence>
<reference key="1">
    <citation type="journal article" date="2007" name="Science">
        <title>Genome sequence of Aedes aegypti, a major arbovirus vector.</title>
        <authorList>
            <person name="Nene V."/>
            <person name="Wortman J.R."/>
            <person name="Lawson D."/>
            <person name="Haas B.J."/>
            <person name="Kodira C.D."/>
            <person name="Tu Z.J."/>
            <person name="Loftus B.J."/>
            <person name="Xi Z."/>
            <person name="Megy K."/>
            <person name="Grabherr M."/>
            <person name="Ren Q."/>
            <person name="Zdobnov E.M."/>
            <person name="Lobo N.F."/>
            <person name="Campbell K.S."/>
            <person name="Brown S.E."/>
            <person name="Bonaldo M.F."/>
            <person name="Zhu J."/>
            <person name="Sinkins S.P."/>
            <person name="Hogenkamp D.G."/>
            <person name="Amedeo P."/>
            <person name="Arensburger P."/>
            <person name="Atkinson P.W."/>
            <person name="Bidwell S.L."/>
            <person name="Biedler J."/>
            <person name="Birney E."/>
            <person name="Bruggner R.V."/>
            <person name="Costas J."/>
            <person name="Coy M.R."/>
            <person name="Crabtree J."/>
            <person name="Crawford M."/>
            <person name="DeBruyn B."/>
            <person name="DeCaprio D."/>
            <person name="Eiglmeier K."/>
            <person name="Eisenstadt E."/>
            <person name="El-Dorry H."/>
            <person name="Gelbart W.M."/>
            <person name="Gomes S.L."/>
            <person name="Hammond M."/>
            <person name="Hannick L.I."/>
            <person name="Hogan J.R."/>
            <person name="Holmes M.H."/>
            <person name="Jaffe D."/>
            <person name="Johnston S.J."/>
            <person name="Kennedy R.C."/>
            <person name="Koo H."/>
            <person name="Kravitz S."/>
            <person name="Kriventseva E.V."/>
            <person name="Kulp D."/>
            <person name="Labutti K."/>
            <person name="Lee E."/>
            <person name="Li S."/>
            <person name="Lovin D.D."/>
            <person name="Mao C."/>
            <person name="Mauceli E."/>
            <person name="Menck C.F."/>
            <person name="Miller J.R."/>
            <person name="Montgomery P."/>
            <person name="Mori A."/>
            <person name="Nascimento A.L."/>
            <person name="Naveira H.F."/>
            <person name="Nusbaum C."/>
            <person name="O'Leary S.B."/>
            <person name="Orvis J."/>
            <person name="Pertea M."/>
            <person name="Quesneville H."/>
            <person name="Reidenbach K.R."/>
            <person name="Rogers Y.-H.C."/>
            <person name="Roth C.W."/>
            <person name="Schneider J.R."/>
            <person name="Schatz M."/>
            <person name="Shumway M."/>
            <person name="Stanke M."/>
            <person name="Stinson E.O."/>
            <person name="Tubio J.M.C."/>
            <person name="Vanzee J.P."/>
            <person name="Verjovski-Almeida S."/>
            <person name="Werner D."/>
            <person name="White O.R."/>
            <person name="Wyder S."/>
            <person name="Zeng Q."/>
            <person name="Zhao Q."/>
            <person name="Zhao Y."/>
            <person name="Hill C.A."/>
            <person name="Raikhel A.S."/>
            <person name="Soares M.B."/>
            <person name="Knudson D.L."/>
            <person name="Lee N.H."/>
            <person name="Galagan J."/>
            <person name="Salzberg S.L."/>
            <person name="Paulsen I.T."/>
            <person name="Dimopoulos G."/>
            <person name="Collins F.H."/>
            <person name="Bruce B."/>
            <person name="Fraser-Liggett C.M."/>
            <person name="Severson D.W."/>
        </authorList>
    </citation>
    <scope>NUCLEOTIDE SEQUENCE [LARGE SCALE GENOMIC DNA]</scope>
    <source>
        <strain>LVPib12</strain>
    </source>
</reference>
<organism>
    <name type="scientific">Aedes aegypti</name>
    <name type="common">Yellowfever mosquito</name>
    <name type="synonym">Culex aegypti</name>
    <dbReference type="NCBI Taxonomy" id="7159"/>
    <lineage>
        <taxon>Eukaryota</taxon>
        <taxon>Metazoa</taxon>
        <taxon>Ecdysozoa</taxon>
        <taxon>Arthropoda</taxon>
        <taxon>Hexapoda</taxon>
        <taxon>Insecta</taxon>
        <taxon>Pterygota</taxon>
        <taxon>Neoptera</taxon>
        <taxon>Endopterygota</taxon>
        <taxon>Diptera</taxon>
        <taxon>Nematocera</taxon>
        <taxon>Culicoidea</taxon>
        <taxon>Culicidae</taxon>
        <taxon>Culicinae</taxon>
        <taxon>Aedini</taxon>
        <taxon>Aedes</taxon>
        <taxon>Stegomyia</taxon>
    </lineage>
</organism>
<proteinExistence type="inferred from homology"/>
<evidence type="ECO:0000250" key="1">
    <source>
        <dbReference type="UniProtKB" id="Q9VJI9"/>
    </source>
</evidence>
<evidence type="ECO:0000255" key="2">
    <source>
        <dbReference type="HAMAP-Rule" id="MF_03038"/>
    </source>
</evidence>
<evidence type="ECO:0000256" key="3">
    <source>
        <dbReference type="SAM" id="MobiDB-lite"/>
    </source>
</evidence>
<evidence type="ECO:0000305" key="4"/>